<dbReference type="EC" id="4.2.1.59" evidence="1"/>
<dbReference type="EMBL" id="CP000941">
    <property type="protein sequence ID" value="ACA11372.1"/>
    <property type="molecule type" value="Genomic_DNA"/>
</dbReference>
<dbReference type="RefSeq" id="WP_004085217.1">
    <property type="nucleotide sequence ID" value="NC_010513.1"/>
</dbReference>
<dbReference type="SMR" id="B0U238"/>
<dbReference type="KEGG" id="xfm:Xfasm12_0355"/>
<dbReference type="HOGENOM" id="CLU_078912_1_2_6"/>
<dbReference type="GO" id="GO:0005737">
    <property type="term" value="C:cytoplasm"/>
    <property type="evidence" value="ECO:0007669"/>
    <property type="project" value="UniProtKB-SubCell"/>
</dbReference>
<dbReference type="GO" id="GO:0016020">
    <property type="term" value="C:membrane"/>
    <property type="evidence" value="ECO:0007669"/>
    <property type="project" value="GOC"/>
</dbReference>
<dbReference type="GO" id="GO:0019171">
    <property type="term" value="F:(3R)-hydroxyacyl-[acyl-carrier-protein] dehydratase activity"/>
    <property type="evidence" value="ECO:0007669"/>
    <property type="project" value="UniProtKB-EC"/>
</dbReference>
<dbReference type="GO" id="GO:0006633">
    <property type="term" value="P:fatty acid biosynthetic process"/>
    <property type="evidence" value="ECO:0007669"/>
    <property type="project" value="UniProtKB-UniRule"/>
</dbReference>
<dbReference type="GO" id="GO:0009245">
    <property type="term" value="P:lipid A biosynthetic process"/>
    <property type="evidence" value="ECO:0007669"/>
    <property type="project" value="UniProtKB-UniRule"/>
</dbReference>
<dbReference type="CDD" id="cd01288">
    <property type="entry name" value="FabZ"/>
    <property type="match status" value="1"/>
</dbReference>
<dbReference type="FunFam" id="3.10.129.10:FF:000001">
    <property type="entry name" value="3-hydroxyacyl-[acyl-carrier-protein] dehydratase FabZ"/>
    <property type="match status" value="1"/>
</dbReference>
<dbReference type="Gene3D" id="3.10.129.10">
    <property type="entry name" value="Hotdog Thioesterase"/>
    <property type="match status" value="1"/>
</dbReference>
<dbReference type="HAMAP" id="MF_00406">
    <property type="entry name" value="FabZ"/>
    <property type="match status" value="1"/>
</dbReference>
<dbReference type="InterPro" id="IPR013114">
    <property type="entry name" value="FabA_FabZ"/>
</dbReference>
<dbReference type="InterPro" id="IPR010084">
    <property type="entry name" value="FabZ"/>
</dbReference>
<dbReference type="InterPro" id="IPR029069">
    <property type="entry name" value="HotDog_dom_sf"/>
</dbReference>
<dbReference type="NCBIfam" id="TIGR01750">
    <property type="entry name" value="fabZ"/>
    <property type="match status" value="1"/>
</dbReference>
<dbReference type="NCBIfam" id="NF000582">
    <property type="entry name" value="PRK00006.1"/>
    <property type="match status" value="1"/>
</dbReference>
<dbReference type="PANTHER" id="PTHR30272">
    <property type="entry name" value="3-HYDROXYACYL-[ACYL-CARRIER-PROTEIN] DEHYDRATASE"/>
    <property type="match status" value="1"/>
</dbReference>
<dbReference type="PANTHER" id="PTHR30272:SF1">
    <property type="entry name" value="3-HYDROXYACYL-[ACYL-CARRIER-PROTEIN] DEHYDRATASE"/>
    <property type="match status" value="1"/>
</dbReference>
<dbReference type="Pfam" id="PF07977">
    <property type="entry name" value="FabA"/>
    <property type="match status" value="1"/>
</dbReference>
<dbReference type="SUPFAM" id="SSF54637">
    <property type="entry name" value="Thioesterase/thiol ester dehydrase-isomerase"/>
    <property type="match status" value="1"/>
</dbReference>
<keyword id="KW-0963">Cytoplasm</keyword>
<keyword id="KW-0441">Lipid A biosynthesis</keyword>
<keyword id="KW-0444">Lipid biosynthesis</keyword>
<keyword id="KW-0443">Lipid metabolism</keyword>
<keyword id="KW-0456">Lyase</keyword>
<comment type="function">
    <text evidence="1">Involved in unsaturated fatty acids biosynthesis. Catalyzes the dehydration of short chain beta-hydroxyacyl-ACPs and long chain saturated and unsaturated beta-hydroxyacyl-ACPs.</text>
</comment>
<comment type="catalytic activity">
    <reaction evidence="1">
        <text>a (3R)-hydroxyacyl-[ACP] = a (2E)-enoyl-[ACP] + H2O</text>
        <dbReference type="Rhea" id="RHEA:13097"/>
        <dbReference type="Rhea" id="RHEA-COMP:9925"/>
        <dbReference type="Rhea" id="RHEA-COMP:9945"/>
        <dbReference type="ChEBI" id="CHEBI:15377"/>
        <dbReference type="ChEBI" id="CHEBI:78784"/>
        <dbReference type="ChEBI" id="CHEBI:78827"/>
        <dbReference type="EC" id="4.2.1.59"/>
    </reaction>
</comment>
<comment type="subcellular location">
    <subcellularLocation>
        <location evidence="1">Cytoplasm</location>
    </subcellularLocation>
</comment>
<comment type="similarity">
    <text evidence="1">Belongs to the thioester dehydratase family. FabZ subfamily.</text>
</comment>
<evidence type="ECO:0000255" key="1">
    <source>
        <dbReference type="HAMAP-Rule" id="MF_00406"/>
    </source>
</evidence>
<accession>B0U238</accession>
<proteinExistence type="inferred from homology"/>
<protein>
    <recommendedName>
        <fullName evidence="1">3-hydroxyacyl-[acyl-carrier-protein] dehydratase FabZ</fullName>
        <ecNumber evidence="1">4.2.1.59</ecNumber>
    </recommendedName>
    <alternativeName>
        <fullName evidence="1">(3R)-hydroxymyristoyl-[acyl-carrier-protein] dehydratase</fullName>
        <shortName evidence="1">(3R)-hydroxymyristoyl-ACP dehydrase</shortName>
    </alternativeName>
    <alternativeName>
        <fullName evidence="1">Beta-hydroxyacyl-ACP dehydratase</fullName>
    </alternativeName>
</protein>
<reference key="1">
    <citation type="journal article" date="2010" name="J. Bacteriol.">
        <title>Whole genome sequences of two Xylella fastidiosa strains (M12 and M23) causing almond leaf scorch disease in California.</title>
        <authorList>
            <person name="Chen J."/>
            <person name="Xie G."/>
            <person name="Han S."/>
            <person name="Chertkov O."/>
            <person name="Sims D."/>
            <person name="Civerolo E.L."/>
        </authorList>
    </citation>
    <scope>NUCLEOTIDE SEQUENCE [LARGE SCALE GENOMIC DNA]</scope>
    <source>
        <strain>M12</strain>
    </source>
</reference>
<sequence>MSDSPATAHTRLELPIDIIKIQALLPHRYPFLLVDRILELDQKQKRIVAQKNVSINEPFFQGHFPEHPVMPGVLIIEALAQAGGVMTQLDLSHNGHSSLLFYMVRVDNARFNKQVVPGDILILDMTMKRRIRNMGCYYGEARVNGEVVACADIMCAGVRS</sequence>
<name>FABZ_XYLFM</name>
<gene>
    <name evidence="1" type="primary">fabZ</name>
    <name type="ordered locus">Xfasm12_0355</name>
</gene>
<organism>
    <name type="scientific">Xylella fastidiosa (strain M12)</name>
    <dbReference type="NCBI Taxonomy" id="405440"/>
    <lineage>
        <taxon>Bacteria</taxon>
        <taxon>Pseudomonadati</taxon>
        <taxon>Pseudomonadota</taxon>
        <taxon>Gammaproteobacteria</taxon>
        <taxon>Lysobacterales</taxon>
        <taxon>Lysobacteraceae</taxon>
        <taxon>Xylella</taxon>
    </lineage>
</organism>
<feature type="chain" id="PRO_1000197305" description="3-hydroxyacyl-[acyl-carrier-protein] dehydratase FabZ">
    <location>
        <begin position="1"/>
        <end position="160"/>
    </location>
</feature>
<feature type="active site" evidence="1">
    <location>
        <position position="63"/>
    </location>
</feature>